<feature type="chain" id="PRO_0000065952" description="WW domain-binding protein 2">
    <location>
        <begin position="1"/>
        <end position="262"/>
    </location>
</feature>
<feature type="domain" description="GRAM">
    <location>
        <begin position="1"/>
        <end position="84"/>
    </location>
</feature>
<feature type="region of interest" description="Disordered" evidence="3">
    <location>
        <begin position="197"/>
        <end position="262"/>
    </location>
</feature>
<feature type="short sequence motif" description="PPxY motif 1">
    <location>
        <begin position="196"/>
        <end position="200"/>
    </location>
</feature>
<feature type="short sequence motif" description="PPxY motif 2">
    <location>
        <begin position="249"/>
        <end position="253"/>
    </location>
</feature>
<feature type="compositionally biased region" description="Pro residues" evidence="3">
    <location>
        <begin position="197"/>
        <end position="206"/>
    </location>
</feature>
<feature type="compositionally biased region" description="Low complexity" evidence="3">
    <location>
        <begin position="219"/>
        <end position="231"/>
    </location>
</feature>
<feature type="compositionally biased region" description="Pro residues" evidence="3">
    <location>
        <begin position="246"/>
        <end position="255"/>
    </location>
</feature>
<feature type="modified residue" description="Phosphotyrosine" evidence="2">
    <location>
        <position position="192"/>
    </location>
</feature>
<feature type="modified residue" description="Phosphotyrosine" evidence="2">
    <location>
        <position position="232"/>
    </location>
</feature>
<reference key="1">
    <citation type="submission" date="2002-04" db="EMBL/GenBank/DDBJ databases">
        <title>Isolation of the cDNA encoding for rat Wbp2.</title>
        <authorList>
            <person name="Zannini M."/>
            <person name="Nitsch R."/>
        </authorList>
    </citation>
    <scope>NUCLEOTIDE SEQUENCE [MRNA]</scope>
</reference>
<proteinExistence type="evidence at protein level"/>
<sequence>MALNKNHSEGGGVIVNNTESILMSYDHVELTFNDMKNVPEAFKGTKKGTVYLTPYRVIFLSKGKDAMRSFMMPFYLMKDCEVKQPVFGANFIKGTVKAEAGGGWEGSASYKLTFTAGGAIEFGQQMLQVASQASRGEVPNGAYGYPYMPSGAYVFPPPVANGMYPCPPGYPYPPPPPEFYPGPPMMDGAMGYVQPPPPPYPGPMEPPVVSGPSAPPTPAAEAKAAEAAASAYYNPGNPHNVYMPTSQPPPPPYYPPEDKKTQ</sequence>
<comment type="function">
    <text evidence="1 2">Acts as a transcriptional coactivator of estrogen and progesterone receptors (ESR1 and PGR) upon hormone activation. In presence of estrogen, binds to ESR1-responsive promoters. Synergizes with YAP1 to enhance PGR activity (By similarity). Modulates expression of post-synaptic scaffolding proteins via regulation of ESR1, ESR2 and PGR (By similarity).</text>
</comment>
<comment type="subunit">
    <text evidence="1 2">Binds to the WW domain of YAP1, WWP1 and WWP2. Interacts with NEDD4 (By similarity). Interacts with ESR1 and UBE3A (By similarity).</text>
</comment>
<comment type="interaction">
    <interactant intactId="EBI-1223229">
        <id>Q8R478</id>
    </interactant>
    <interactant intactId="EBI-1223113">
        <id>P51974</id>
        <label>Pax8</label>
    </interactant>
    <organismsDiffer>false</organismsDiffer>
    <experiments>4</experiments>
</comment>
<comment type="subcellular location">
    <subcellularLocation>
        <location evidence="2">Cytoplasm</location>
    </subcellularLocation>
    <subcellularLocation>
        <location evidence="2">Nucleus</location>
    </subcellularLocation>
    <text evidence="2">Translocates from cytoplasm to nucleus when phosphorylated.</text>
</comment>
<comment type="domain">
    <text evidence="1 2">The PPxY motif 1 mediates interaction with NEDD4 (By similarity). The PPxY motif 2 is required for the coactivation function (By similarity).</text>
</comment>
<comment type="PTM">
    <text evidence="2">Phosphorylated in repsonse to EGF as well as estrogen and progesterone hormones. Tyr-192 and Tyr-232 are phosphorylated by YES and SRC inducing nuclear translocation.</text>
</comment>
<dbReference type="EMBL" id="AF499026">
    <property type="protein sequence ID" value="AAM18132.1"/>
    <property type="molecule type" value="mRNA"/>
</dbReference>
<dbReference type="RefSeq" id="NP_620431.1">
    <property type="nucleotide sequence ID" value="NM_138975.1"/>
</dbReference>
<dbReference type="SMR" id="Q8R478"/>
<dbReference type="FunCoup" id="Q8R478">
    <property type="interactions" value="2230"/>
</dbReference>
<dbReference type="IntAct" id="Q8R478">
    <property type="interactions" value="1"/>
</dbReference>
<dbReference type="STRING" id="10116.ENSRNOP00000010826"/>
<dbReference type="GlyGen" id="Q8R478">
    <property type="glycosylation" value="1 site"/>
</dbReference>
<dbReference type="PhosphoSitePlus" id="Q8R478"/>
<dbReference type="jPOST" id="Q8R478"/>
<dbReference type="PaxDb" id="10116-ENSRNOP00000010826"/>
<dbReference type="GeneID" id="192645"/>
<dbReference type="KEGG" id="rno:192645"/>
<dbReference type="AGR" id="RGD:620032"/>
<dbReference type="CTD" id="23558"/>
<dbReference type="RGD" id="620032">
    <property type="gene designation" value="Wbp2"/>
</dbReference>
<dbReference type="eggNOG" id="KOG3294">
    <property type="taxonomic scope" value="Eukaryota"/>
</dbReference>
<dbReference type="InParanoid" id="Q8R478"/>
<dbReference type="PRO" id="PR:Q8R478"/>
<dbReference type="Proteomes" id="UP000002494">
    <property type="component" value="Unplaced"/>
</dbReference>
<dbReference type="GO" id="GO:0000785">
    <property type="term" value="C:chromatin"/>
    <property type="evidence" value="ECO:0000266"/>
    <property type="project" value="RGD"/>
</dbReference>
<dbReference type="GO" id="GO:0005737">
    <property type="term" value="C:cytoplasm"/>
    <property type="evidence" value="ECO:0000250"/>
    <property type="project" value="UniProtKB"/>
</dbReference>
<dbReference type="GO" id="GO:0005634">
    <property type="term" value="C:nucleus"/>
    <property type="evidence" value="ECO:0000250"/>
    <property type="project" value="UniProtKB"/>
</dbReference>
<dbReference type="GO" id="GO:0031490">
    <property type="term" value="F:chromatin DNA binding"/>
    <property type="evidence" value="ECO:0000266"/>
    <property type="project" value="RGD"/>
</dbReference>
<dbReference type="GO" id="GO:0030331">
    <property type="term" value="F:nuclear estrogen receptor binding"/>
    <property type="evidence" value="ECO:0000266"/>
    <property type="project" value="RGD"/>
</dbReference>
<dbReference type="GO" id="GO:0000978">
    <property type="term" value="F:RNA polymerase II cis-regulatory region sequence-specific DNA binding"/>
    <property type="evidence" value="ECO:0000266"/>
    <property type="project" value="RGD"/>
</dbReference>
<dbReference type="GO" id="GO:0003713">
    <property type="term" value="F:transcription coactivator activity"/>
    <property type="evidence" value="ECO:0000250"/>
    <property type="project" value="UniProtKB"/>
</dbReference>
<dbReference type="GO" id="GO:0071391">
    <property type="term" value="P:cellular response to estrogen stimulus"/>
    <property type="evidence" value="ECO:0000266"/>
    <property type="project" value="RGD"/>
</dbReference>
<dbReference type="GO" id="GO:0071169">
    <property type="term" value="P:establishment of protein localization to chromatin"/>
    <property type="evidence" value="ECO:0000266"/>
    <property type="project" value="RGD"/>
</dbReference>
<dbReference type="GO" id="GO:0045893">
    <property type="term" value="P:positive regulation of DNA-templated transcription"/>
    <property type="evidence" value="ECO:0000318"/>
    <property type="project" value="GO_Central"/>
</dbReference>
<dbReference type="GO" id="GO:0033148">
    <property type="term" value="P:positive regulation of intracellular estrogen receptor signaling pathway"/>
    <property type="evidence" value="ECO:0000250"/>
    <property type="project" value="UniProtKB"/>
</dbReference>
<dbReference type="GO" id="GO:0045944">
    <property type="term" value="P:positive regulation of transcription by RNA polymerase II"/>
    <property type="evidence" value="ECO:0000266"/>
    <property type="project" value="RGD"/>
</dbReference>
<dbReference type="GO" id="GO:0050847">
    <property type="term" value="P:progesterone receptor signaling pathway"/>
    <property type="evidence" value="ECO:0000250"/>
    <property type="project" value="UniProtKB"/>
</dbReference>
<dbReference type="GO" id="GO:0043627">
    <property type="term" value="P:response to estrogen"/>
    <property type="evidence" value="ECO:0000250"/>
    <property type="project" value="UniProtKB"/>
</dbReference>
<dbReference type="GO" id="GO:0032570">
    <property type="term" value="P:response to progesterone"/>
    <property type="evidence" value="ECO:0000250"/>
    <property type="project" value="UniProtKB"/>
</dbReference>
<dbReference type="GO" id="GO:0045815">
    <property type="term" value="P:transcription initiation-coupled chromatin remodeling"/>
    <property type="evidence" value="ECO:0000266"/>
    <property type="project" value="RGD"/>
</dbReference>
<dbReference type="CDD" id="cd13214">
    <property type="entry name" value="PH-GRAM_WBP2"/>
    <property type="match status" value="1"/>
</dbReference>
<dbReference type="InterPro" id="IPR004182">
    <property type="entry name" value="GRAM"/>
</dbReference>
<dbReference type="InterPro" id="IPR044852">
    <property type="entry name" value="WBP2-like"/>
</dbReference>
<dbReference type="PANTHER" id="PTHR31606">
    <property type="entry name" value="WW DOMAIN BINDING PROTEIN 2, ISOFORM E"/>
    <property type="match status" value="1"/>
</dbReference>
<dbReference type="PANTHER" id="PTHR31606:SF4">
    <property type="entry name" value="WW DOMAIN-BINDING PROTEIN 2"/>
    <property type="match status" value="1"/>
</dbReference>
<dbReference type="Pfam" id="PF02893">
    <property type="entry name" value="GRAM"/>
    <property type="match status" value="1"/>
</dbReference>
<dbReference type="SUPFAM" id="SSF50729">
    <property type="entry name" value="PH domain-like"/>
    <property type="match status" value="1"/>
</dbReference>
<protein>
    <recommendedName>
        <fullName>WW domain-binding protein 2</fullName>
        <shortName>WBP-2</shortName>
    </recommendedName>
</protein>
<accession>Q8R478</accession>
<keyword id="KW-0963">Cytoplasm</keyword>
<keyword id="KW-0539">Nucleus</keyword>
<keyword id="KW-0597">Phosphoprotein</keyword>
<keyword id="KW-1185">Reference proteome</keyword>
<keyword id="KW-0677">Repeat</keyword>
<gene>
    <name type="primary">Wbp2</name>
</gene>
<evidence type="ECO:0000250" key="1">
    <source>
        <dbReference type="UniProtKB" id="P97765"/>
    </source>
</evidence>
<evidence type="ECO:0000250" key="2">
    <source>
        <dbReference type="UniProtKB" id="Q969T9"/>
    </source>
</evidence>
<evidence type="ECO:0000256" key="3">
    <source>
        <dbReference type="SAM" id="MobiDB-lite"/>
    </source>
</evidence>
<organism>
    <name type="scientific">Rattus norvegicus</name>
    <name type="common">Rat</name>
    <dbReference type="NCBI Taxonomy" id="10116"/>
    <lineage>
        <taxon>Eukaryota</taxon>
        <taxon>Metazoa</taxon>
        <taxon>Chordata</taxon>
        <taxon>Craniata</taxon>
        <taxon>Vertebrata</taxon>
        <taxon>Euteleostomi</taxon>
        <taxon>Mammalia</taxon>
        <taxon>Eutheria</taxon>
        <taxon>Euarchontoglires</taxon>
        <taxon>Glires</taxon>
        <taxon>Rodentia</taxon>
        <taxon>Myomorpha</taxon>
        <taxon>Muroidea</taxon>
        <taxon>Muridae</taxon>
        <taxon>Murinae</taxon>
        <taxon>Rattus</taxon>
    </lineage>
</organism>
<name>WBP2_RAT</name>